<feature type="chain" id="PRO_0000045442" description="Isoaspartyl peptidase/L-asparaginase 1 subunit alpha">
    <location>
        <begin position="1"/>
        <end position="182"/>
    </location>
</feature>
<feature type="chain" id="PRO_0000045443" description="Isoaspartyl peptidase/L-asparaginase 1 subunit beta">
    <location>
        <begin position="183"/>
        <end position="315"/>
    </location>
</feature>
<feature type="active site" description="Nucleophile">
    <location>
        <position position="183"/>
    </location>
</feature>
<feature type="binding site" evidence="1">
    <location>
        <begin position="211"/>
        <end position="214"/>
    </location>
    <ligand>
        <name>substrate</name>
    </ligand>
</feature>
<feature type="binding site" evidence="1">
    <location>
        <begin position="233"/>
        <end position="236"/>
    </location>
    <ligand>
        <name>substrate</name>
    </ligand>
</feature>
<feature type="site" description="Cleavage; by autolysis">
    <location>
        <begin position="182"/>
        <end position="183"/>
    </location>
</feature>
<feature type="modified residue" description="Phosphoserine" evidence="5">
    <location>
        <position position="169"/>
    </location>
</feature>
<feature type="sequence conflict" description="In Ref. 1; CAA84367." evidence="3" ref="1">
    <original>D</original>
    <variation>Y</variation>
    <location>
        <position position="139"/>
    </location>
</feature>
<proteinExistence type="evidence at protein level"/>
<protein>
    <recommendedName>
        <fullName>Isoaspartyl peptidase/L-asparaginase 1</fullName>
        <ecNumber>3.4.19.5</ecNumber>
    </recommendedName>
    <alternativeName>
        <fullName>L-asparagine amidohydrolase 1</fullName>
    </alternativeName>
    <component>
        <recommendedName>
            <fullName>Isoaspartyl peptidase/L-asparaginase 1 subunit alpha</fullName>
        </recommendedName>
    </component>
    <component>
        <recommendedName>
            <fullName>Isoaspartyl peptidase/L-asparaginase 1 subunit beta</fullName>
        </recommendedName>
    </component>
</protein>
<comment type="function">
    <text evidence="2">Acts in asparagine catabolism but also in the final steps of protein and degradation via hydrolysis of a range of isoaspartyl dipeptides. The affinity for Asn and at least 4 isoaspartyl dipeptides (L-beta-Asp-Ala, L-beta-Asp-Gly, L-beta-Asp-Leu, L-beta-Asp-Phe) is quite low, KM being greater than 4.0 mM. The enzyme is inactive on alpha-aspartyl dipeptides.</text>
</comment>
<comment type="catalytic activity">
    <reaction>
        <text>Cleavage of a beta-linked Asp residue from the N-terminus of a polypeptide.</text>
        <dbReference type="EC" id="3.4.19.5"/>
    </reaction>
</comment>
<comment type="subunit">
    <text evidence="4">Heterotetramer of two alpha and two beta chains arranged as a dimer of alpha/beta heterodimers.</text>
</comment>
<comment type="alternative products">
    <event type="alternative splicing"/>
    <isoform>
        <id>P50287-1</id>
        <name>1</name>
        <sequence type="displayed"/>
    </isoform>
    <text>A number of isoforms are produced. According to EST sequences.</text>
</comment>
<comment type="PTM">
    <text>Cleaved into an alpha and beta chain by autocatalysis; this activates the enzyme. The N-terminal residue of the beta subunit is responsible for the nucleophile hydrolase activity.</text>
</comment>
<comment type="similarity">
    <text evidence="3">Belongs to the Ntn-hydrolase family.</text>
</comment>
<name>ASPGA_ARATH</name>
<accession>P50287</accession>
<accession>Q9LEZ6</accession>
<gene>
    <name type="ordered locus">At5g08100</name>
    <name type="ORF">T22D6_40</name>
</gene>
<sequence>MVGWAIALHGGAGDIPIDLPDERRIPRESALRHCLDLGISALKSGKPPLDVAELVVRELENHPDFNAGKGSVLTAQGTVEMEASIMDGKTKRCGAVSGLTTVVNPISLARLVMEKTPHIYLAFDAAEAFARAHGVETVDSSHFITPENIARLKQAKEFNRVQLDYTVPSPKVPDNCGDSQIGTVGCVAVDSAGNLASATSTGGYVNKMVGRIGDTPVIGAGTYANHLCAISATGKGEDIIRGTVARDVAALMEYKGLSLTEAAAYVVDQSVPRGSCGLVAVSANGEVTMPFNTTGMFRACASEDGYSEIAIWPNN</sequence>
<organism>
    <name type="scientific">Arabidopsis thaliana</name>
    <name type="common">Mouse-ear cress</name>
    <dbReference type="NCBI Taxonomy" id="3702"/>
    <lineage>
        <taxon>Eukaryota</taxon>
        <taxon>Viridiplantae</taxon>
        <taxon>Streptophyta</taxon>
        <taxon>Embryophyta</taxon>
        <taxon>Tracheophyta</taxon>
        <taxon>Spermatophyta</taxon>
        <taxon>Magnoliopsida</taxon>
        <taxon>eudicotyledons</taxon>
        <taxon>Gunneridae</taxon>
        <taxon>Pentapetalae</taxon>
        <taxon>rosids</taxon>
        <taxon>malvids</taxon>
        <taxon>Brassicales</taxon>
        <taxon>Brassicaceae</taxon>
        <taxon>Camelineae</taxon>
        <taxon>Arabidopsis</taxon>
    </lineage>
</organism>
<keyword id="KW-0025">Alternative splicing</keyword>
<keyword id="KW-0068">Autocatalytic cleavage</keyword>
<keyword id="KW-0903">Direct protein sequencing</keyword>
<keyword id="KW-0378">Hydrolase</keyword>
<keyword id="KW-0597">Phosphoprotein</keyword>
<keyword id="KW-0645">Protease</keyword>
<keyword id="KW-1185">Reference proteome</keyword>
<evidence type="ECO:0000250" key="1"/>
<evidence type="ECO:0000269" key="2">
    <source>
    </source>
</evidence>
<evidence type="ECO:0000305" key="3"/>
<evidence type="ECO:0000305" key="4">
    <source>
    </source>
</evidence>
<evidence type="ECO:0007744" key="5">
    <source>
    </source>
</evidence>
<dbReference type="EC" id="3.4.19.5"/>
<dbReference type="EMBL" id="Z34884">
    <property type="protein sequence ID" value="CAA84367.1"/>
    <property type="molecule type" value="Genomic_DNA"/>
</dbReference>
<dbReference type="EMBL" id="AL357612">
    <property type="protein sequence ID" value="CAB93711.1"/>
    <property type="molecule type" value="Genomic_DNA"/>
</dbReference>
<dbReference type="EMBL" id="CP002688">
    <property type="protein sequence ID" value="AED91247.1"/>
    <property type="molecule type" value="Genomic_DNA"/>
</dbReference>
<dbReference type="EMBL" id="AY039555">
    <property type="protein sequence ID" value="AAK62610.1"/>
    <property type="molecule type" value="mRNA"/>
</dbReference>
<dbReference type="EMBL" id="AY093755">
    <property type="protein sequence ID" value="AAM10379.1"/>
    <property type="molecule type" value="mRNA"/>
</dbReference>
<dbReference type="PIR" id="S53127">
    <property type="entry name" value="S53127"/>
</dbReference>
<dbReference type="PIR" id="T50495">
    <property type="entry name" value="T50495"/>
</dbReference>
<dbReference type="RefSeq" id="NP_196427.1">
    <molecule id="P50287-1"/>
    <property type="nucleotide sequence ID" value="NM_120892.4"/>
</dbReference>
<dbReference type="SMR" id="P50287"/>
<dbReference type="FunCoup" id="P50287">
    <property type="interactions" value="813"/>
</dbReference>
<dbReference type="STRING" id="3702.P50287"/>
<dbReference type="MEROPS" id="T02.A01"/>
<dbReference type="iPTMnet" id="P50287"/>
<dbReference type="PaxDb" id="3702-AT5G08100.1"/>
<dbReference type="ProteomicsDB" id="246803">
    <molecule id="P50287-1"/>
</dbReference>
<dbReference type="EnsemblPlants" id="AT5G08100.1">
    <molecule id="P50287-1"/>
    <property type="protein sequence ID" value="AT5G08100.1"/>
    <property type="gene ID" value="AT5G08100"/>
</dbReference>
<dbReference type="GeneID" id="830704"/>
<dbReference type="Gramene" id="AT5G08100.1">
    <molecule id="P50287-1"/>
    <property type="protein sequence ID" value="AT5G08100.1"/>
    <property type="gene ID" value="AT5G08100"/>
</dbReference>
<dbReference type="KEGG" id="ath:AT5G08100"/>
<dbReference type="Araport" id="AT5G08100"/>
<dbReference type="TAIR" id="AT5G08100">
    <property type="gene designation" value="ASPGA1"/>
</dbReference>
<dbReference type="eggNOG" id="KOG1592">
    <property type="taxonomic scope" value="Eukaryota"/>
</dbReference>
<dbReference type="HOGENOM" id="CLU_021603_1_2_1"/>
<dbReference type="InParanoid" id="P50287"/>
<dbReference type="OMA" id="MGIIMVD"/>
<dbReference type="PhylomeDB" id="P50287"/>
<dbReference type="BioCyc" id="ARA:AT5G08100-MONOMER"/>
<dbReference type="SABIO-RK" id="P50287"/>
<dbReference type="PRO" id="PR:P50287"/>
<dbReference type="Proteomes" id="UP000006548">
    <property type="component" value="Chromosome 5"/>
</dbReference>
<dbReference type="ExpressionAtlas" id="P50287">
    <property type="expression patterns" value="baseline and differential"/>
</dbReference>
<dbReference type="GO" id="GO:0005886">
    <property type="term" value="C:plasma membrane"/>
    <property type="evidence" value="ECO:0007005"/>
    <property type="project" value="TAIR"/>
</dbReference>
<dbReference type="GO" id="GO:0004067">
    <property type="term" value="F:asparaginase activity"/>
    <property type="evidence" value="ECO:0000314"/>
    <property type="project" value="TAIR"/>
</dbReference>
<dbReference type="GO" id="GO:0008798">
    <property type="term" value="F:beta-aspartyl-peptidase activity"/>
    <property type="evidence" value="ECO:0007669"/>
    <property type="project" value="UniProtKB-EC"/>
</dbReference>
<dbReference type="GO" id="GO:0006508">
    <property type="term" value="P:proteolysis"/>
    <property type="evidence" value="ECO:0007669"/>
    <property type="project" value="UniProtKB-KW"/>
</dbReference>
<dbReference type="CDD" id="cd04701">
    <property type="entry name" value="Asparaginase_2"/>
    <property type="match status" value="1"/>
</dbReference>
<dbReference type="FunFam" id="3.60.20.30:FF:000001">
    <property type="entry name" value="Isoaspartyl peptidase/L-asparaginase"/>
    <property type="match status" value="1"/>
</dbReference>
<dbReference type="Gene3D" id="3.60.20.30">
    <property type="entry name" value="(Glycosyl)asparaginase"/>
    <property type="match status" value="1"/>
</dbReference>
<dbReference type="InterPro" id="IPR029055">
    <property type="entry name" value="Ntn_hydrolases_N"/>
</dbReference>
<dbReference type="InterPro" id="IPR000246">
    <property type="entry name" value="Peptidase_T2"/>
</dbReference>
<dbReference type="PANTHER" id="PTHR10188">
    <property type="entry name" value="L-ASPARAGINASE"/>
    <property type="match status" value="1"/>
</dbReference>
<dbReference type="PANTHER" id="PTHR10188:SF6">
    <property type="entry name" value="N(4)-(BETA-N-ACETYLGLUCOSAMINYL)-L-ASPARAGINASE"/>
    <property type="match status" value="1"/>
</dbReference>
<dbReference type="Pfam" id="PF01112">
    <property type="entry name" value="Asparaginase_2"/>
    <property type="match status" value="1"/>
</dbReference>
<dbReference type="SUPFAM" id="SSF56235">
    <property type="entry name" value="N-terminal nucleophile aminohydrolases (Ntn hydrolases)"/>
    <property type="match status" value="1"/>
</dbReference>
<reference key="1">
    <citation type="journal article" date="1995" name="Plant Physiol.">
        <title>Molecular cloning of the gene encoding the L-asparaginase gene of Arabidopsis thaliana.</title>
        <authorList>
            <person name="Casado A."/>
            <person name="Caballero J.L."/>
            <person name="Franco A.R."/>
            <person name="Cardenas J."/>
            <person name="Grant M.R."/>
            <person name="Munoz-Blanco J."/>
        </authorList>
    </citation>
    <scope>NUCLEOTIDE SEQUENCE [GENOMIC DNA]</scope>
    <source>
        <strain>cv. Landsberg erecta</strain>
    </source>
</reference>
<reference key="2">
    <citation type="journal article" date="2000" name="Nature">
        <title>Sequence and analysis of chromosome 5 of the plant Arabidopsis thaliana.</title>
        <authorList>
            <person name="Tabata S."/>
            <person name="Kaneko T."/>
            <person name="Nakamura Y."/>
            <person name="Kotani H."/>
            <person name="Kato T."/>
            <person name="Asamizu E."/>
            <person name="Miyajima N."/>
            <person name="Sasamoto S."/>
            <person name="Kimura T."/>
            <person name="Hosouchi T."/>
            <person name="Kawashima K."/>
            <person name="Kohara M."/>
            <person name="Matsumoto M."/>
            <person name="Matsuno A."/>
            <person name="Muraki A."/>
            <person name="Nakayama S."/>
            <person name="Nakazaki N."/>
            <person name="Naruo K."/>
            <person name="Okumura S."/>
            <person name="Shinpo S."/>
            <person name="Takeuchi C."/>
            <person name="Wada T."/>
            <person name="Watanabe A."/>
            <person name="Yamada M."/>
            <person name="Yasuda M."/>
            <person name="Sato S."/>
            <person name="de la Bastide M."/>
            <person name="Huang E."/>
            <person name="Spiegel L."/>
            <person name="Gnoj L."/>
            <person name="O'Shaughnessy A."/>
            <person name="Preston R."/>
            <person name="Habermann K."/>
            <person name="Murray J."/>
            <person name="Johnson D."/>
            <person name="Rohlfing T."/>
            <person name="Nelson J."/>
            <person name="Stoneking T."/>
            <person name="Pepin K."/>
            <person name="Spieth J."/>
            <person name="Sekhon M."/>
            <person name="Armstrong J."/>
            <person name="Becker M."/>
            <person name="Belter E."/>
            <person name="Cordum H."/>
            <person name="Cordes M."/>
            <person name="Courtney L."/>
            <person name="Courtney W."/>
            <person name="Dante M."/>
            <person name="Du H."/>
            <person name="Edwards J."/>
            <person name="Fryman J."/>
            <person name="Haakensen B."/>
            <person name="Lamar E."/>
            <person name="Latreille P."/>
            <person name="Leonard S."/>
            <person name="Meyer R."/>
            <person name="Mulvaney E."/>
            <person name="Ozersky P."/>
            <person name="Riley A."/>
            <person name="Strowmatt C."/>
            <person name="Wagner-McPherson C."/>
            <person name="Wollam A."/>
            <person name="Yoakum M."/>
            <person name="Bell M."/>
            <person name="Dedhia N."/>
            <person name="Parnell L."/>
            <person name="Shah R."/>
            <person name="Rodriguez M."/>
            <person name="Hoon See L."/>
            <person name="Vil D."/>
            <person name="Baker J."/>
            <person name="Kirchoff K."/>
            <person name="Toth K."/>
            <person name="King L."/>
            <person name="Bahret A."/>
            <person name="Miller B."/>
            <person name="Marra M.A."/>
            <person name="Martienssen R."/>
            <person name="McCombie W.R."/>
            <person name="Wilson R.K."/>
            <person name="Murphy G."/>
            <person name="Bancroft I."/>
            <person name="Volckaert G."/>
            <person name="Wambutt R."/>
            <person name="Duesterhoeft A."/>
            <person name="Stiekema W."/>
            <person name="Pohl T."/>
            <person name="Entian K.-D."/>
            <person name="Terryn N."/>
            <person name="Hartley N."/>
            <person name="Bent E."/>
            <person name="Johnson S."/>
            <person name="Langham S.-A."/>
            <person name="McCullagh B."/>
            <person name="Robben J."/>
            <person name="Grymonprez B."/>
            <person name="Zimmermann W."/>
            <person name="Ramsperger U."/>
            <person name="Wedler H."/>
            <person name="Balke K."/>
            <person name="Wedler E."/>
            <person name="Peters S."/>
            <person name="van Staveren M."/>
            <person name="Dirkse W."/>
            <person name="Mooijman P."/>
            <person name="Klein Lankhorst R."/>
            <person name="Weitzenegger T."/>
            <person name="Bothe G."/>
            <person name="Rose M."/>
            <person name="Hauf J."/>
            <person name="Berneiser S."/>
            <person name="Hempel S."/>
            <person name="Feldpausch M."/>
            <person name="Lamberth S."/>
            <person name="Villarroel R."/>
            <person name="Gielen J."/>
            <person name="Ardiles W."/>
            <person name="Bents O."/>
            <person name="Lemcke K."/>
            <person name="Kolesov G."/>
            <person name="Mayer K.F.X."/>
            <person name="Rudd S."/>
            <person name="Schoof H."/>
            <person name="Schueller C."/>
            <person name="Zaccaria P."/>
            <person name="Mewes H.-W."/>
            <person name="Bevan M."/>
            <person name="Fransz P.F."/>
        </authorList>
    </citation>
    <scope>NUCLEOTIDE SEQUENCE [LARGE SCALE GENOMIC DNA]</scope>
    <source>
        <strain>cv. Columbia</strain>
    </source>
</reference>
<reference key="3">
    <citation type="journal article" date="2017" name="Plant J.">
        <title>Araport11: a complete reannotation of the Arabidopsis thaliana reference genome.</title>
        <authorList>
            <person name="Cheng C.Y."/>
            <person name="Krishnakumar V."/>
            <person name="Chan A.P."/>
            <person name="Thibaud-Nissen F."/>
            <person name="Schobel S."/>
            <person name="Town C.D."/>
        </authorList>
    </citation>
    <scope>GENOME REANNOTATION</scope>
    <source>
        <strain>cv. Columbia</strain>
    </source>
</reference>
<reference key="4">
    <citation type="journal article" date="2003" name="Science">
        <title>Empirical analysis of transcriptional activity in the Arabidopsis genome.</title>
        <authorList>
            <person name="Yamada K."/>
            <person name="Lim J."/>
            <person name="Dale J.M."/>
            <person name="Chen H."/>
            <person name="Shinn P."/>
            <person name="Palm C.J."/>
            <person name="Southwick A.M."/>
            <person name="Wu H.C."/>
            <person name="Kim C.J."/>
            <person name="Nguyen M."/>
            <person name="Pham P.K."/>
            <person name="Cheuk R.F."/>
            <person name="Karlin-Newmann G."/>
            <person name="Liu S.X."/>
            <person name="Lam B."/>
            <person name="Sakano H."/>
            <person name="Wu T."/>
            <person name="Yu G."/>
            <person name="Miranda M."/>
            <person name="Quach H.L."/>
            <person name="Tripp M."/>
            <person name="Chang C.H."/>
            <person name="Lee J.M."/>
            <person name="Toriumi M.J."/>
            <person name="Chan M.M."/>
            <person name="Tang C.C."/>
            <person name="Onodera C.S."/>
            <person name="Deng J.M."/>
            <person name="Akiyama K."/>
            <person name="Ansari Y."/>
            <person name="Arakawa T."/>
            <person name="Banh J."/>
            <person name="Banno F."/>
            <person name="Bowser L."/>
            <person name="Brooks S.Y."/>
            <person name="Carninci P."/>
            <person name="Chao Q."/>
            <person name="Choy N."/>
            <person name="Enju A."/>
            <person name="Goldsmith A.D."/>
            <person name="Gurjal M."/>
            <person name="Hansen N.F."/>
            <person name="Hayashizaki Y."/>
            <person name="Johnson-Hopson C."/>
            <person name="Hsuan V.W."/>
            <person name="Iida K."/>
            <person name="Karnes M."/>
            <person name="Khan S."/>
            <person name="Koesema E."/>
            <person name="Ishida J."/>
            <person name="Jiang P.X."/>
            <person name="Jones T."/>
            <person name="Kawai J."/>
            <person name="Kamiya A."/>
            <person name="Meyers C."/>
            <person name="Nakajima M."/>
            <person name="Narusaka M."/>
            <person name="Seki M."/>
            <person name="Sakurai T."/>
            <person name="Satou M."/>
            <person name="Tamse R."/>
            <person name="Vaysberg M."/>
            <person name="Wallender E.K."/>
            <person name="Wong C."/>
            <person name="Yamamura Y."/>
            <person name="Yuan S."/>
            <person name="Shinozaki K."/>
            <person name="Davis R.W."/>
            <person name="Theologis A."/>
            <person name="Ecker J.R."/>
        </authorList>
    </citation>
    <scope>NUCLEOTIDE SEQUENCE [LARGE SCALE MRNA]</scope>
    <source>
        <strain>cv. Columbia</strain>
    </source>
</reference>
<reference key="5">
    <citation type="journal article" date="2002" name="Biochem. J.">
        <title>Isoaspartyl dipeptidase activity of plant-type asparaginases.</title>
        <authorList>
            <person name="Hejazi M."/>
            <person name="Piotukh K."/>
            <person name="Mattow J."/>
            <person name="Deutzmann R."/>
            <person name="Volkmer-Engert R."/>
            <person name="Lockau W."/>
        </authorList>
    </citation>
    <scope>PROTEIN SEQUENCE OF 183-191</scope>
    <scope>FUNCTION</scope>
    <scope>SUBUNIT</scope>
    <scope>AUTOCATALYTIC CLEAVAGE</scope>
</reference>
<reference key="6">
    <citation type="journal article" date="2009" name="Plant Physiol.">
        <title>Large-scale Arabidopsis phosphoproteome profiling reveals novel chloroplast kinase substrates and phosphorylation networks.</title>
        <authorList>
            <person name="Reiland S."/>
            <person name="Messerli G."/>
            <person name="Baerenfaller K."/>
            <person name="Gerrits B."/>
            <person name="Endler A."/>
            <person name="Grossmann J."/>
            <person name="Gruissem W."/>
            <person name="Baginsky S."/>
        </authorList>
    </citation>
    <scope>PHOSPHORYLATION [LARGE SCALE ANALYSIS] AT SER-169</scope>
    <scope>IDENTIFICATION BY MASS SPECTROMETRY [LARGE SCALE ANALYSIS]</scope>
</reference>